<accession>Q4QLV9</accession>
<proteinExistence type="evidence at protein level"/>
<keyword id="KW-1277">Toxin-antitoxin system</keyword>
<name>VAPB2_HAEI8</name>
<comment type="function">
    <text evidence="2">Antitoxin component of a type II toxin-antitoxin (TA) system (PubMed:27672196). Neutralizes the effect of cognate toxin VapC2 but not non-cognate toxin VapC2 (PubMed:27672196).</text>
</comment>
<comment type="subunit">
    <text evidence="5">Probably forms a complex with cognate toxin VapC2.</text>
</comment>
<comment type="domain">
    <text evidence="2">The C-terminal 33 residues are required to neutralize cognate toxin VapC2 (PubMed:27672196).</text>
</comment>
<comment type="similarity">
    <text evidence="4">Belongs to the VapB family.</text>
</comment>
<organism>
    <name type="scientific">Haemophilus influenzae (strain 86-028NP)</name>
    <dbReference type="NCBI Taxonomy" id="281310"/>
    <lineage>
        <taxon>Bacteria</taxon>
        <taxon>Pseudomonadati</taxon>
        <taxon>Pseudomonadota</taxon>
        <taxon>Gammaproteobacteria</taxon>
        <taxon>Pasteurellales</taxon>
        <taxon>Pasteurellaceae</taxon>
        <taxon>Haemophilus</taxon>
    </lineage>
</organism>
<feature type="chain" id="PRO_0000440070" description="Antitoxin VapB2">
    <location>
        <begin position="1"/>
        <end position="77"/>
    </location>
</feature>
<feature type="domain" description="SpoVT-AbrB" evidence="1">
    <location>
        <begin position="4"/>
        <end position="46"/>
    </location>
</feature>
<feature type="mutagenesis site" description="Loss of antitoxin activity for VapC2." evidence="2">
    <original>W</original>
    <variation>G</variation>
    <location>
        <position position="48"/>
    </location>
</feature>
<feature type="mutagenesis site" description="Partial loss of antitoxin activity for VapC2." evidence="2">
    <original>F</original>
    <variation>V</variation>
    <location>
        <position position="51"/>
    </location>
</feature>
<feature type="mutagenesis site" description="Increased antitoxin activity for VapC2." evidence="2">
    <original>F</original>
    <variation>V</variation>
    <location>
        <position position="52"/>
    </location>
</feature>
<feature type="mutagenesis site" description="Increased antitoxin activity for VapC2." evidence="2">
    <original>D</original>
    <variation>A</variation>
    <location>
        <position position="61"/>
    </location>
</feature>
<feature type="mutagenesis site" description="Protein very unstable, thus loss of antitoxin activity for VapC2." evidence="2">
    <original>F</original>
    <variation>V</variation>
    <location>
        <position position="62"/>
    </location>
</feature>
<feature type="mutagenesis site" description="Wild-type antitoxin activity." evidence="2">
    <original>R</original>
    <variation>G</variation>
    <location>
        <position position="66"/>
    </location>
</feature>
<sequence length="77" mass="8881">MIEASVFMTNRSQAVRLPAEVRFSEEIKKLSVRVSGSDRILSPLNQSWDSFFLNDQAVSDDFMNEREIAFQPEREAL</sequence>
<reference key="1">
    <citation type="journal article" date="2005" name="J. Bacteriol.">
        <title>Genomic sequence of an otitis media isolate of nontypeable Haemophilus influenzae: comparative study with H. influenzae serotype d, strain KW20.</title>
        <authorList>
            <person name="Harrison A."/>
            <person name="Dyer D.W."/>
            <person name="Gillaspy A."/>
            <person name="Ray W.C."/>
            <person name="Mungur R."/>
            <person name="Carson M.B."/>
            <person name="Zhong H."/>
            <person name="Gipson J."/>
            <person name="Gipson M."/>
            <person name="Johnson L.S."/>
            <person name="Lewis L."/>
            <person name="Bakaletz L.O."/>
            <person name="Munson R.S. Jr."/>
        </authorList>
    </citation>
    <scope>NUCLEOTIDE SEQUENCE [LARGE SCALE GENOMIC DNA]</scope>
    <source>
        <strain>86-028NP</strain>
    </source>
</reference>
<reference key="2">
    <citation type="journal article" date="2016" name="J. Bacteriol.">
        <title>Structural determinants for antitoxin identity and insulation of cross talk between homologous toxin-antitoxin systems.</title>
        <authorList>
            <person name="Walling L.R."/>
            <person name="Butler J.S."/>
        </authorList>
    </citation>
    <scope>FUNCTION</scope>
    <scope>DOMAIN</scope>
    <scope>MUTAGENESIS OF TRP-48; PHE-51; PHE-52; ASP-61; PHE-62 AND ARG-66</scope>
    <source>
        <strain>86-028NP</strain>
    </source>
</reference>
<dbReference type="EMBL" id="CP000057">
    <property type="protein sequence ID" value="AAX87988.1"/>
    <property type="molecule type" value="Genomic_DNA"/>
</dbReference>
<dbReference type="RefSeq" id="WP_005648011.1">
    <property type="nucleotide sequence ID" value="NC_007146.2"/>
</dbReference>
<dbReference type="SMR" id="Q4QLV9"/>
<dbReference type="GeneID" id="93219987"/>
<dbReference type="KEGG" id="hit:NTHI1121"/>
<dbReference type="HOGENOM" id="CLU_162018_3_1_6"/>
<dbReference type="Proteomes" id="UP000002525">
    <property type="component" value="Chromosome"/>
</dbReference>
<dbReference type="GO" id="GO:0003677">
    <property type="term" value="F:DNA binding"/>
    <property type="evidence" value="ECO:0007669"/>
    <property type="project" value="InterPro"/>
</dbReference>
<dbReference type="Gene3D" id="2.10.260.10">
    <property type="match status" value="1"/>
</dbReference>
<dbReference type="InterPro" id="IPR047976">
    <property type="entry name" value="Anti_VapB2-like"/>
</dbReference>
<dbReference type="InterPro" id="IPR007159">
    <property type="entry name" value="SpoVT-AbrB_dom"/>
</dbReference>
<dbReference type="InterPro" id="IPR037914">
    <property type="entry name" value="SpoVT-AbrB_sf"/>
</dbReference>
<dbReference type="InterPro" id="IPR051734">
    <property type="entry name" value="VapB_TA_antitoxins"/>
</dbReference>
<dbReference type="NCBIfam" id="NF040493">
    <property type="entry name" value="TA_anti_VapB"/>
    <property type="match status" value="1"/>
</dbReference>
<dbReference type="PANTHER" id="PTHR37550">
    <property type="entry name" value="ANTITOXIN VAPB1"/>
    <property type="match status" value="1"/>
</dbReference>
<dbReference type="PANTHER" id="PTHR37550:SF3">
    <property type="entry name" value="ANTITOXIN VAPB1"/>
    <property type="match status" value="1"/>
</dbReference>
<dbReference type="Pfam" id="PF04014">
    <property type="entry name" value="MazE_antitoxin"/>
    <property type="match status" value="1"/>
</dbReference>
<dbReference type="SUPFAM" id="SSF89447">
    <property type="entry name" value="AbrB/MazE/MraZ-like"/>
    <property type="match status" value="1"/>
</dbReference>
<dbReference type="PROSITE" id="PS51740">
    <property type="entry name" value="SPOVT_ABRB"/>
    <property type="match status" value="1"/>
</dbReference>
<protein>
    <recommendedName>
        <fullName>Antitoxin VapB2</fullName>
    </recommendedName>
    <alternativeName>
        <fullName evidence="3">NTHi VapB2</fullName>
    </alternativeName>
</protein>
<evidence type="ECO:0000255" key="1">
    <source>
        <dbReference type="PROSITE-ProRule" id="PRU01076"/>
    </source>
</evidence>
<evidence type="ECO:0000269" key="2">
    <source>
    </source>
</evidence>
<evidence type="ECO:0000303" key="3">
    <source>
    </source>
</evidence>
<evidence type="ECO:0000305" key="4"/>
<evidence type="ECO:0000305" key="5">
    <source>
    </source>
</evidence>
<gene>
    <name evidence="3" type="primary">vapB2</name>
    <name type="ordered locus">NTHI1121</name>
</gene>